<proteinExistence type="inferred from homology"/>
<reference key="1">
    <citation type="submission" date="2007-03" db="EMBL/GenBank/DDBJ databases">
        <title>Annotation of Culex pipiens quinquefasciatus.</title>
        <authorList>
            <consortium name="The Broad Institute Genome Sequencing Platform"/>
            <person name="Atkinson P.W."/>
            <person name="Hemingway J."/>
            <person name="Christensen B.M."/>
            <person name="Higgs S."/>
            <person name="Kodira C.D."/>
            <person name="Hannick L.I."/>
            <person name="Megy K."/>
            <person name="O'Leary S.B."/>
            <person name="Pearson M."/>
            <person name="Haas B.J."/>
            <person name="Mauceli E."/>
            <person name="Wortman J.R."/>
            <person name="Lee N.H."/>
            <person name="Guigo R."/>
            <person name="Stanke M."/>
            <person name="Alvarado L."/>
            <person name="Amedeo P."/>
            <person name="Antoine C.H."/>
            <person name="Arensburger P."/>
            <person name="Bidwell S.L."/>
            <person name="Crawford M."/>
            <person name="Camaro F."/>
            <person name="Devon K."/>
            <person name="Engels R."/>
            <person name="Hammond M."/>
            <person name="Howarth C."/>
            <person name="Koehrsen M."/>
            <person name="Lawson D."/>
            <person name="Montgomery P."/>
            <person name="Nene V."/>
            <person name="Nusbaum C."/>
            <person name="Puiu D."/>
            <person name="Romero-Severson J."/>
            <person name="Severson D.W."/>
            <person name="Shumway M."/>
            <person name="Sisk P."/>
            <person name="Stolte C."/>
            <person name="Zeng Q."/>
            <person name="Eisenstadt E."/>
            <person name="Fraser-Liggett C.M."/>
            <person name="Strausberg R."/>
            <person name="Galagan J."/>
            <person name="Birren B."/>
            <person name="Collins F.H."/>
        </authorList>
    </citation>
    <scope>NUCLEOTIDE SEQUENCE [LARGE SCALE GENOMIC DNA]</scope>
    <source>
        <strain>JHB</strain>
    </source>
</reference>
<organism>
    <name type="scientific">Culex quinquefasciatus</name>
    <name type="common">Southern house mosquito</name>
    <name type="synonym">Culex pungens</name>
    <dbReference type="NCBI Taxonomy" id="7176"/>
    <lineage>
        <taxon>Eukaryota</taxon>
        <taxon>Metazoa</taxon>
        <taxon>Ecdysozoa</taxon>
        <taxon>Arthropoda</taxon>
        <taxon>Hexapoda</taxon>
        <taxon>Insecta</taxon>
        <taxon>Pterygota</taxon>
        <taxon>Neoptera</taxon>
        <taxon>Endopterygota</taxon>
        <taxon>Diptera</taxon>
        <taxon>Nematocera</taxon>
        <taxon>Culicoidea</taxon>
        <taxon>Culicidae</taxon>
        <taxon>Culicinae</taxon>
        <taxon>Culicini</taxon>
        <taxon>Culex</taxon>
        <taxon>Culex</taxon>
    </lineage>
</organism>
<protein>
    <recommendedName>
        <fullName>Leucine-rich repeat protein soc-2 homolog</fullName>
    </recommendedName>
    <alternativeName>
        <fullName>Protein Sur-8 homolog</fullName>
    </alternativeName>
    <alternativeName>
        <fullName>Protein soc-2 homolog</fullName>
    </alternativeName>
</protein>
<sequence length="628" mass="68979">MGLCHSNCPFVEQKCHRIKVSRPTEGGVWPTTNGFSLDHTTKSAKTLGRTRTTSPKTNERGMNLGSSGGTSTSGHTSSGYSSGNAPGTSSSSTGGGATSSEMPAEIRPKVVTVKHPESNKPKPTTKKGKAIQADVDVIKEFQRCKEENILRLDLSKSSITVIPPSVKDCTSLIEFYLYGNKISSLPVEIGCLSNLKTLALNENSLTSLPDSLQNLKALKVLDLRHNKLSEIPDVIYKLHTLTTLYLRFNRIKVVGDNLKNLSSLTMLSLRENKIHELPAAIGHLRNLTTLDLSHNHLKHLPEAIGNCVNLTALDLQHNDLLDIPETIGNLANLQRLGLRYNQLTAIPVSLRNCIHMDEFNVEGNSISQLPDGLLASLSNLTTITLSRNAFHSYPSGGPAQFTNVTSINMEHNQIDKIQYGIFSRAKGLTKLNMKENALTSLPLDIGTWSQMVELNFGTNSLAKLPDDIHCLQNLEILILSNNMLKRIPNTIGNLKKLRVLDLEENRLESLPSEIGLLHDLQKLILQSNALQSLPRTIGHLTNLTYLSVGENNLQYLPEEIGTLENLESLYINDNASLVKLPYELALCQNLAIMSIENCPLSALPPEVVGGGPSLVIQYLKLHSPYRQM</sequence>
<feature type="chain" id="PRO_0000385633" description="Leucine-rich repeat protein soc-2 homolog">
    <location>
        <begin position="1"/>
        <end position="628"/>
    </location>
</feature>
<feature type="repeat" description="LRR 1">
    <location>
        <begin position="148"/>
        <end position="169"/>
    </location>
</feature>
<feature type="repeat" description="LRR 2">
    <location>
        <begin position="171"/>
        <end position="192"/>
    </location>
</feature>
<feature type="repeat" description="LRR 3">
    <location>
        <begin position="194"/>
        <end position="216"/>
    </location>
</feature>
<feature type="repeat" description="LRR 4">
    <location>
        <begin position="217"/>
        <end position="238"/>
    </location>
</feature>
<feature type="repeat" description="LRR 5">
    <location>
        <begin position="240"/>
        <end position="262"/>
    </location>
</feature>
<feature type="repeat" description="LRR 6">
    <location>
        <begin position="263"/>
        <end position="284"/>
    </location>
</feature>
<feature type="repeat" description="LRR 7">
    <location>
        <begin position="286"/>
        <end position="307"/>
    </location>
</feature>
<feature type="repeat" description="LRR 8">
    <location>
        <begin position="309"/>
        <end position="330"/>
    </location>
</feature>
<feature type="repeat" description="LRR 9">
    <location>
        <begin position="332"/>
        <end position="353"/>
    </location>
</feature>
<feature type="repeat" description="LRR 10">
    <location>
        <begin position="355"/>
        <end position="376"/>
    </location>
</feature>
<feature type="repeat" description="LRR 11">
    <location>
        <begin position="379"/>
        <end position="400"/>
    </location>
</feature>
<feature type="repeat" description="LRR 12">
    <location>
        <begin position="403"/>
        <end position="424"/>
    </location>
</feature>
<feature type="repeat" description="LRR 13">
    <location>
        <begin position="427"/>
        <end position="448"/>
    </location>
</feature>
<feature type="repeat" description="LRR 14">
    <location>
        <begin position="450"/>
        <end position="471"/>
    </location>
</feature>
<feature type="repeat" description="LRR 15">
    <location>
        <begin position="473"/>
        <end position="494"/>
    </location>
</feature>
<feature type="repeat" description="LRR 16">
    <location>
        <begin position="496"/>
        <end position="517"/>
    </location>
</feature>
<feature type="repeat" description="LRR 17">
    <location>
        <begin position="519"/>
        <end position="540"/>
    </location>
</feature>
<feature type="repeat" description="LRR 18">
    <location>
        <begin position="542"/>
        <end position="563"/>
    </location>
</feature>
<feature type="repeat" description="LRR 19">
    <location>
        <begin position="565"/>
        <end position="587"/>
    </location>
</feature>
<feature type="repeat" description="LRR 20">
    <location>
        <begin position="589"/>
        <end position="610"/>
    </location>
</feature>
<feature type="region of interest" description="Disordered" evidence="2">
    <location>
        <begin position="23"/>
        <end position="130"/>
    </location>
</feature>
<feature type="compositionally biased region" description="Low complexity" evidence="2">
    <location>
        <begin position="69"/>
        <end position="92"/>
    </location>
</feature>
<feature type="compositionally biased region" description="Basic and acidic residues" evidence="2">
    <location>
        <begin position="104"/>
        <end position="120"/>
    </location>
</feature>
<comment type="function">
    <text evidence="1">Acts as a Ras effector and participates in MAPK pathway activation. Probably acts as a regulatory subunit of protein phosphatase that specifically dephosphorylates Raf kinase and stimulate Raf activity at specialized signaling complexes upon Ras activation (By similarity).</text>
</comment>
<comment type="similarity">
    <text evidence="3">Belongs to the SHOC2 family.</text>
</comment>
<keyword id="KW-0433">Leucine-rich repeat</keyword>
<keyword id="KW-1185">Reference proteome</keyword>
<keyword id="KW-0677">Repeat</keyword>
<dbReference type="EMBL" id="DS231848">
    <property type="protein sequence ID" value="EDS36703.1"/>
    <property type="molecule type" value="Genomic_DNA"/>
</dbReference>
<dbReference type="RefSeq" id="XP_001844363.1">
    <property type="nucleotide sequence ID" value="XM_001844311.1"/>
</dbReference>
<dbReference type="SMR" id="B0W6M9"/>
<dbReference type="FunCoup" id="B0W6M9">
    <property type="interactions" value="1991"/>
</dbReference>
<dbReference type="STRING" id="7176.B0W6M9"/>
<dbReference type="EnsemblMetazoa" id="CPIJ002780-RA">
    <property type="protein sequence ID" value="CPIJ002780-PA"/>
    <property type="gene ID" value="CPIJ002780"/>
</dbReference>
<dbReference type="EnsemblMetazoa" id="CQUJHB010957.R16889">
    <property type="protein sequence ID" value="CQUJHB010957.P16889"/>
    <property type="gene ID" value="CQUJHB010957"/>
</dbReference>
<dbReference type="EnsemblMetazoa" id="XM_038256491.1">
    <property type="protein sequence ID" value="XP_038112419.1"/>
    <property type="gene ID" value="LOC6033975"/>
</dbReference>
<dbReference type="KEGG" id="cqu:CpipJ_CPIJ002780"/>
<dbReference type="VEuPathDB" id="VectorBase:CPIJ002780"/>
<dbReference type="VEuPathDB" id="VectorBase:CQUJHB010957"/>
<dbReference type="eggNOG" id="KOG0619">
    <property type="taxonomic scope" value="Eukaryota"/>
</dbReference>
<dbReference type="HOGENOM" id="CLU_000288_18_23_1"/>
<dbReference type="InParanoid" id="B0W6M9"/>
<dbReference type="OMA" id="NQFTSYP"/>
<dbReference type="OrthoDB" id="676979at2759"/>
<dbReference type="PhylomeDB" id="B0W6M9"/>
<dbReference type="Proteomes" id="UP000002320">
    <property type="component" value="Unassembled WGS sequence"/>
</dbReference>
<dbReference type="FunFam" id="3.80.10.10:FF:000031">
    <property type="entry name" value="leucine-rich repeat protein SHOC-2"/>
    <property type="match status" value="1"/>
</dbReference>
<dbReference type="FunFam" id="3.80.10.10:FF:000115">
    <property type="entry name" value="leucine-rich repeat protein SHOC-2"/>
    <property type="match status" value="1"/>
</dbReference>
<dbReference type="FunFam" id="3.80.10.10:FF:000281">
    <property type="entry name" value="Leucine-rich repeat protein soc-2"/>
    <property type="match status" value="1"/>
</dbReference>
<dbReference type="FunFam" id="3.80.10.10:FF:000450">
    <property type="entry name" value="Leucine-rich repeat protein soc-2"/>
    <property type="match status" value="1"/>
</dbReference>
<dbReference type="Gene3D" id="3.80.10.10">
    <property type="entry name" value="Ribonuclease Inhibitor"/>
    <property type="match status" value="4"/>
</dbReference>
<dbReference type="InterPro" id="IPR001611">
    <property type="entry name" value="Leu-rich_rpt"/>
</dbReference>
<dbReference type="InterPro" id="IPR003591">
    <property type="entry name" value="Leu-rich_rpt_typical-subtyp"/>
</dbReference>
<dbReference type="InterPro" id="IPR050715">
    <property type="entry name" value="LRR-SigEffector_domain"/>
</dbReference>
<dbReference type="InterPro" id="IPR032675">
    <property type="entry name" value="LRR_dom_sf"/>
</dbReference>
<dbReference type="InterPro" id="IPR055414">
    <property type="entry name" value="LRR_R13L4/SHOC2-like"/>
</dbReference>
<dbReference type="PANTHER" id="PTHR45752:SF187">
    <property type="entry name" value="LEUCINE-RICH REPEAT AND IQ DOMAIN-CONTAINING PROTEIN 4"/>
    <property type="match status" value="1"/>
</dbReference>
<dbReference type="PANTHER" id="PTHR45752">
    <property type="entry name" value="LEUCINE-RICH REPEAT-CONTAINING"/>
    <property type="match status" value="1"/>
</dbReference>
<dbReference type="Pfam" id="PF23598">
    <property type="entry name" value="LRR_14"/>
    <property type="match status" value="2"/>
</dbReference>
<dbReference type="Pfam" id="PF13855">
    <property type="entry name" value="LRR_8"/>
    <property type="match status" value="1"/>
</dbReference>
<dbReference type="PRINTS" id="PR00019">
    <property type="entry name" value="LEURICHRPT"/>
</dbReference>
<dbReference type="SMART" id="SM00364">
    <property type="entry name" value="LRR_BAC"/>
    <property type="match status" value="13"/>
</dbReference>
<dbReference type="SMART" id="SM00365">
    <property type="entry name" value="LRR_SD22"/>
    <property type="match status" value="8"/>
</dbReference>
<dbReference type="SMART" id="SM00369">
    <property type="entry name" value="LRR_TYP"/>
    <property type="match status" value="16"/>
</dbReference>
<dbReference type="SUPFAM" id="SSF52058">
    <property type="entry name" value="L domain-like"/>
    <property type="match status" value="2"/>
</dbReference>
<dbReference type="PROSITE" id="PS51450">
    <property type="entry name" value="LRR"/>
    <property type="match status" value="18"/>
</dbReference>
<name>SUR8_CULQU</name>
<accession>B0W6M9</accession>
<gene>
    <name type="primary">Sur-8</name>
    <name type="ORF">CPIJ002780</name>
</gene>
<evidence type="ECO:0000250" key="1"/>
<evidence type="ECO:0000256" key="2">
    <source>
        <dbReference type="SAM" id="MobiDB-lite"/>
    </source>
</evidence>
<evidence type="ECO:0000305" key="3"/>